<sequence>MDASGCMKSLLLAATQYRAAKTPSNAALVQRSLEVISGLKLTRLFASNQILPSECLNCLVELLEDANIDPPLTLSLVTLLSQLASDSETREALRDTYSLTNVLAGVVHRSSTNLSDPVLLQSIQLLQRLTYNVPVFCAGANIDELISFLMHHVQSTEDELTIPCLGLLANLCRHNLPIQTQIKSLNNVKSFYRTLISFLAHSSLTMVVFALSVLSSLTLNEEVGEKLFHARNIHQTFQLIFNIVVNGDGTLTRKYSVDLLMDLLKNPKVADYLTRYEHFTSCLGQVLDLLHGKDPDSSSKILELLLAFCSVVELRHTLRQAILEPSGLPVSGNTRFVTRSKTFEPSVALVHLSNQPLEGSEDCSVLALQLFKEVFEDVISSGNSASAEHFVDLLLPVLLDHLQTPEQIVDELLVKKKCERMVKTINVLTVLCRDDILKTHASKLLTASQCVSLIEHQFSYSGIDAGFGTKVVDSKMCKLAADIILKTLDLMSRLKQDVPGMEVSFYKILQDQRLITPLTFALTSDYREQVQVGLRILFEAAPLPDFPAILLGESIAANNAYRQQEKEHASKRIQLQSPLISNVTVSSSSCANGDESTASNVQELIQKLHSGLEVKEPITDMRISDIMDIYEQKLSSLASKETRLQDLLEAKALALAQADRLMAQYRCQRAQAESEARTLAAMLKDAERKNEELNVLLKAQQVESERAQTDIEQLFQHNRKLQTVAEEHEMLKKSSVDLLQRYETTERQHKDLRITCNSLNKEIEAMKKLNESLKQQNDRTAAQLVESEEHRKELQQQLHDRESKIASLQQKIKGLEEKLKAQQKEKNSMEETVDVLRKELSKTEQARKELSIKASSLEVQKSQLEVRLEEKEALVKLQKEELNKHSTMIAMIHSLSGGKLSAEAVNLSL</sequence>
<dbReference type="EMBL" id="AJ719387">
    <property type="protein sequence ID" value="CAG31046.1"/>
    <property type="status" value="ALT_INIT"/>
    <property type="molecule type" value="mRNA"/>
</dbReference>
<dbReference type="RefSeq" id="NP_001025956.1">
    <property type="nucleotide sequence ID" value="NM_001030785.2"/>
</dbReference>
<dbReference type="SMR" id="Q5ZMJ7"/>
<dbReference type="FunCoup" id="Q5ZMJ7">
    <property type="interactions" value="1048"/>
</dbReference>
<dbReference type="STRING" id="9031.ENSGALP00000024744"/>
<dbReference type="PaxDb" id="9031-ENSGALP00000024744"/>
<dbReference type="GeneID" id="418410"/>
<dbReference type="KEGG" id="gga:418410"/>
<dbReference type="CTD" id="57650"/>
<dbReference type="VEuPathDB" id="HostDB:geneid_418410"/>
<dbReference type="eggNOG" id="ENOG502QTAP">
    <property type="taxonomic scope" value="Eukaryota"/>
</dbReference>
<dbReference type="InParanoid" id="Q5ZMJ7"/>
<dbReference type="OrthoDB" id="73401at2759"/>
<dbReference type="PhylomeDB" id="Q5ZMJ7"/>
<dbReference type="PRO" id="PR:Q5ZMJ7"/>
<dbReference type="Proteomes" id="UP000000539">
    <property type="component" value="Unassembled WGS sequence"/>
</dbReference>
<dbReference type="GO" id="GO:0005694">
    <property type="term" value="C:chromosome"/>
    <property type="evidence" value="ECO:0000250"/>
    <property type="project" value="UniProtKB"/>
</dbReference>
<dbReference type="GO" id="GO:0005737">
    <property type="term" value="C:cytoplasm"/>
    <property type="evidence" value="ECO:0007669"/>
    <property type="project" value="UniProtKB-SubCell"/>
</dbReference>
<dbReference type="GO" id="GO:0004864">
    <property type="term" value="F:protein phosphatase inhibitor activity"/>
    <property type="evidence" value="ECO:0000250"/>
    <property type="project" value="UniProtKB"/>
</dbReference>
<dbReference type="GO" id="GO:0051276">
    <property type="term" value="P:chromosome organization"/>
    <property type="evidence" value="ECO:0000250"/>
    <property type="project" value="UniProtKB"/>
</dbReference>
<dbReference type="GO" id="GO:0006974">
    <property type="term" value="P:DNA damage response"/>
    <property type="evidence" value="ECO:0000250"/>
    <property type="project" value="UniProtKB"/>
</dbReference>
<dbReference type="Gene3D" id="1.10.287.1490">
    <property type="match status" value="1"/>
</dbReference>
<dbReference type="Gene3D" id="1.25.10.10">
    <property type="entry name" value="Leucine-rich Repeat Variant"/>
    <property type="match status" value="1"/>
</dbReference>
<dbReference type="InterPro" id="IPR011989">
    <property type="entry name" value="ARM-like"/>
</dbReference>
<dbReference type="InterPro" id="IPR016024">
    <property type="entry name" value="ARM-type_fold"/>
</dbReference>
<dbReference type="InterPro" id="IPR042510">
    <property type="entry name" value="CIP2A"/>
</dbReference>
<dbReference type="InterPro" id="IPR048701">
    <property type="entry name" value="CIP2A_N"/>
</dbReference>
<dbReference type="PANTHER" id="PTHR23161">
    <property type="entry name" value="PROTEIN CIP2A"/>
    <property type="match status" value="1"/>
</dbReference>
<dbReference type="PANTHER" id="PTHR23161:SF2">
    <property type="entry name" value="PROTEIN CIP2A"/>
    <property type="match status" value="1"/>
</dbReference>
<dbReference type="Pfam" id="PF21044">
    <property type="entry name" value="CIP2A_N"/>
    <property type="match status" value="1"/>
</dbReference>
<dbReference type="SUPFAM" id="SSF48371">
    <property type="entry name" value="ARM repeat"/>
    <property type="match status" value="1"/>
</dbReference>
<dbReference type="SUPFAM" id="SSF57997">
    <property type="entry name" value="Tropomyosin"/>
    <property type="match status" value="1"/>
</dbReference>
<proteinExistence type="evidence at transcript level"/>
<keyword id="KW-0158">Chromosome</keyword>
<keyword id="KW-0175">Coiled coil</keyword>
<keyword id="KW-0963">Cytoplasm</keyword>
<keyword id="KW-0227">DNA damage</keyword>
<keyword id="KW-1185">Reference proteome</keyword>
<feature type="chain" id="PRO_0000287143" description="Protein CIP2A homolog">
    <location>
        <begin position="1"/>
        <end position="909"/>
    </location>
</feature>
<feature type="coiled-coil region" evidence="2">
    <location>
        <begin position="630"/>
        <end position="888"/>
    </location>
</feature>
<feature type="short sequence motif" description="Nuclear export signal" evidence="1">
    <location>
        <begin position="602"/>
        <end position="616"/>
    </location>
</feature>
<gene>
    <name type="primary">CIP2A</name>
    <name type="ORF">RCJMB04_1n3</name>
</gene>
<accession>Q5ZMJ7</accession>
<comment type="function">
    <text evidence="1">Acts as an inhibitor of protein phosphatase PP2A (By similarity). Together with TOPBP1, plays an essential role in the response to genome instability generated by the presence of acentric chromosome fragments derived from shattered chromosomes within micronuclei (By similarity). The CIP2A-TOPBP1 complex tethers chromosome fragments during mitosis to ensure clustered segregation of the fragments to a single daughter cell nucleus, facilitating re-ligation with limited chromosome scattering and loss (By similarity).</text>
</comment>
<comment type="subunit">
    <text evidence="1">Homodimer (By similarity). Interacts with TOPBP1; forming the CIP2A-TOPBP1 complex (By similarity).</text>
</comment>
<comment type="subcellular location">
    <subcellularLocation>
        <location evidence="1">Cytoplasm</location>
    </subcellularLocation>
    <subcellularLocation>
        <location evidence="1">Chromosome</location>
    </subcellularLocation>
    <text evidence="1">Predominantly localizes within the cytoplasm (By similarity). Localizes to broken chromosomes within micronuclei during interphase and following chromothripsis (By similarity).</text>
</comment>
<comment type="similarity">
    <text evidence="3">Belongs to the CIP2A family.</text>
</comment>
<comment type="sequence caution" evidence="3">
    <conflict type="erroneous initiation">
        <sequence resource="EMBL-CDS" id="CAG31046"/>
    </conflict>
</comment>
<organism>
    <name type="scientific">Gallus gallus</name>
    <name type="common">Chicken</name>
    <dbReference type="NCBI Taxonomy" id="9031"/>
    <lineage>
        <taxon>Eukaryota</taxon>
        <taxon>Metazoa</taxon>
        <taxon>Chordata</taxon>
        <taxon>Craniata</taxon>
        <taxon>Vertebrata</taxon>
        <taxon>Euteleostomi</taxon>
        <taxon>Archelosauria</taxon>
        <taxon>Archosauria</taxon>
        <taxon>Dinosauria</taxon>
        <taxon>Saurischia</taxon>
        <taxon>Theropoda</taxon>
        <taxon>Coelurosauria</taxon>
        <taxon>Aves</taxon>
        <taxon>Neognathae</taxon>
        <taxon>Galloanserae</taxon>
        <taxon>Galliformes</taxon>
        <taxon>Phasianidae</taxon>
        <taxon>Phasianinae</taxon>
        <taxon>Gallus</taxon>
    </lineage>
</organism>
<name>CIP2A_CHICK</name>
<evidence type="ECO:0000250" key="1">
    <source>
        <dbReference type="UniProtKB" id="Q8TCG1"/>
    </source>
</evidence>
<evidence type="ECO:0000255" key="2"/>
<evidence type="ECO:0000305" key="3"/>
<protein>
    <recommendedName>
        <fullName>Protein CIP2A homolog</fullName>
    </recommendedName>
</protein>
<reference key="1">
    <citation type="journal article" date="2005" name="Genome Biol.">
        <title>Full-length cDNAs from chicken bursal lymphocytes to facilitate gene function analysis.</title>
        <authorList>
            <person name="Caldwell R.B."/>
            <person name="Kierzek A.M."/>
            <person name="Arakawa H."/>
            <person name="Bezzubov Y."/>
            <person name="Zaim J."/>
            <person name="Fiedler P."/>
            <person name="Kutter S."/>
            <person name="Blagodatski A."/>
            <person name="Kostovska D."/>
            <person name="Koter M."/>
            <person name="Plachy J."/>
            <person name="Carninci P."/>
            <person name="Hayashizaki Y."/>
            <person name="Buerstedde J.-M."/>
        </authorList>
    </citation>
    <scope>NUCLEOTIDE SEQUENCE [LARGE SCALE MRNA]</scope>
    <source>
        <strain>CB</strain>
        <tissue>Bursa of Fabricius</tissue>
    </source>
</reference>